<organism>
    <name type="scientific">Escherichia coli O157:H7</name>
    <dbReference type="NCBI Taxonomy" id="83334"/>
    <lineage>
        <taxon>Bacteria</taxon>
        <taxon>Pseudomonadati</taxon>
        <taxon>Pseudomonadota</taxon>
        <taxon>Gammaproteobacteria</taxon>
        <taxon>Enterobacterales</taxon>
        <taxon>Enterobacteriaceae</taxon>
        <taxon>Escherichia</taxon>
    </lineage>
</organism>
<proteinExistence type="inferred from homology"/>
<name>DPAL_ECO57</name>
<feature type="chain" id="PRO_0000185592" description="Diaminopropionate ammonia-lyase">
    <location>
        <begin position="1"/>
        <end position="398"/>
    </location>
</feature>
<feature type="modified residue" description="N6-(pyridoxal phosphate)lysine" evidence="1">
    <location>
        <position position="77"/>
    </location>
</feature>
<protein>
    <recommendedName>
        <fullName>Diaminopropionate ammonia-lyase</fullName>
        <shortName>DAPAL</shortName>
        <ecNumber evidence="2">4.3.1.15</ecNumber>
    </recommendedName>
    <alternativeName>
        <fullName>2,3-diaminopropionate ammonia-lyase</fullName>
    </alternativeName>
    <alternativeName>
        <fullName>Alpha,beta-diaminopropionate ammonia-lyase</fullName>
    </alternativeName>
</protein>
<keyword id="KW-0456">Lyase</keyword>
<keyword id="KW-0663">Pyridoxal phosphate</keyword>
<keyword id="KW-1185">Reference proteome</keyword>
<reference key="1">
    <citation type="journal article" date="2001" name="Nature">
        <title>Genome sequence of enterohaemorrhagic Escherichia coli O157:H7.</title>
        <authorList>
            <person name="Perna N.T."/>
            <person name="Plunkett G. III"/>
            <person name="Burland V."/>
            <person name="Mau B."/>
            <person name="Glasner J.D."/>
            <person name="Rose D.J."/>
            <person name="Mayhew G.F."/>
            <person name="Evans P.S."/>
            <person name="Gregor J."/>
            <person name="Kirkpatrick H.A."/>
            <person name="Posfai G."/>
            <person name="Hackett J."/>
            <person name="Klink S."/>
            <person name="Boutin A."/>
            <person name="Shao Y."/>
            <person name="Miller L."/>
            <person name="Grotbeck E.J."/>
            <person name="Davis N.W."/>
            <person name="Lim A."/>
            <person name="Dimalanta E.T."/>
            <person name="Potamousis K."/>
            <person name="Apodaca J."/>
            <person name="Anantharaman T.S."/>
            <person name="Lin J."/>
            <person name="Yen G."/>
            <person name="Schwartz D.C."/>
            <person name="Welch R.A."/>
            <person name="Blattner F.R."/>
        </authorList>
    </citation>
    <scope>NUCLEOTIDE SEQUENCE [LARGE SCALE GENOMIC DNA]</scope>
    <source>
        <strain>O157:H7 / EDL933 / ATCC 700927 / EHEC</strain>
    </source>
</reference>
<reference key="2">
    <citation type="journal article" date="2001" name="DNA Res.">
        <title>Complete genome sequence of enterohemorrhagic Escherichia coli O157:H7 and genomic comparison with a laboratory strain K-12.</title>
        <authorList>
            <person name="Hayashi T."/>
            <person name="Makino K."/>
            <person name="Ohnishi M."/>
            <person name="Kurokawa K."/>
            <person name="Ishii K."/>
            <person name="Yokoyama K."/>
            <person name="Han C.-G."/>
            <person name="Ohtsubo E."/>
            <person name="Nakayama K."/>
            <person name="Murata T."/>
            <person name="Tanaka M."/>
            <person name="Tobe T."/>
            <person name="Iida T."/>
            <person name="Takami H."/>
            <person name="Honda T."/>
            <person name="Sasakawa C."/>
            <person name="Ogasawara N."/>
            <person name="Yasunaga T."/>
            <person name="Kuhara S."/>
            <person name="Shiba T."/>
            <person name="Hattori M."/>
            <person name="Shinagawa H."/>
        </authorList>
    </citation>
    <scope>NUCLEOTIDE SEQUENCE [LARGE SCALE GENOMIC DNA]</scope>
    <source>
        <strain>O157:H7 / Sakai / RIMD 0509952 / EHEC</strain>
    </source>
</reference>
<accession>P66901</accession>
<accession>Q46804</accession>
<dbReference type="EC" id="4.3.1.15" evidence="2"/>
<dbReference type="EMBL" id="AE005174">
    <property type="protein sequence ID" value="AAG58000.1"/>
    <property type="molecule type" value="Genomic_DNA"/>
</dbReference>
<dbReference type="EMBL" id="BA000007">
    <property type="protein sequence ID" value="BAB37167.1"/>
    <property type="molecule type" value="Genomic_DNA"/>
</dbReference>
<dbReference type="PIR" id="D85942">
    <property type="entry name" value="D85942"/>
</dbReference>
<dbReference type="PIR" id="H91096">
    <property type="entry name" value="H91096"/>
</dbReference>
<dbReference type="RefSeq" id="NP_311771.1">
    <property type="nucleotide sequence ID" value="NC_002695.1"/>
</dbReference>
<dbReference type="SMR" id="P66901"/>
<dbReference type="STRING" id="155864.Z4210"/>
<dbReference type="GeneID" id="916434"/>
<dbReference type="KEGG" id="ece:Z4210"/>
<dbReference type="KEGG" id="ecs:ECs_3744"/>
<dbReference type="PATRIC" id="fig|386585.9.peg.3906"/>
<dbReference type="eggNOG" id="COG1171">
    <property type="taxonomic scope" value="Bacteria"/>
</dbReference>
<dbReference type="HOGENOM" id="CLU_021802_8_0_6"/>
<dbReference type="OMA" id="IQDTAWE"/>
<dbReference type="Proteomes" id="UP000000558">
    <property type="component" value="Chromosome"/>
</dbReference>
<dbReference type="Proteomes" id="UP000002519">
    <property type="component" value="Chromosome"/>
</dbReference>
<dbReference type="GO" id="GO:0008838">
    <property type="term" value="F:diaminopropionate ammonia-lyase activity"/>
    <property type="evidence" value="ECO:0007669"/>
    <property type="project" value="UniProtKB-EC"/>
</dbReference>
<dbReference type="GO" id="GO:0030170">
    <property type="term" value="F:pyridoxal phosphate binding"/>
    <property type="evidence" value="ECO:0007669"/>
    <property type="project" value="InterPro"/>
</dbReference>
<dbReference type="CDD" id="cd00640">
    <property type="entry name" value="Trp-synth-beta_II"/>
    <property type="match status" value="1"/>
</dbReference>
<dbReference type="FunFam" id="3.40.50.1100:FF:000033">
    <property type="entry name" value="Diaminopropionate ammonia-lyase"/>
    <property type="match status" value="1"/>
</dbReference>
<dbReference type="FunFam" id="3.40.50.1100:FF:000034">
    <property type="entry name" value="Diaminopropionate ammonia-lyase"/>
    <property type="match status" value="1"/>
</dbReference>
<dbReference type="Gene3D" id="3.40.50.1100">
    <property type="match status" value="2"/>
</dbReference>
<dbReference type="InterPro" id="IPR010081">
    <property type="entry name" value="DiNH2opropionate_NH3_lyase"/>
</dbReference>
<dbReference type="InterPro" id="IPR019871">
    <property type="entry name" value="DiNH2propionate_NH3-lyase_sub"/>
</dbReference>
<dbReference type="InterPro" id="IPR001926">
    <property type="entry name" value="TrpB-like_PALP"/>
</dbReference>
<dbReference type="InterPro" id="IPR036052">
    <property type="entry name" value="TrpB-like_PALP_sf"/>
</dbReference>
<dbReference type="NCBIfam" id="TIGR03528">
    <property type="entry name" value="2_3_DAP_am_ly"/>
    <property type="match status" value="1"/>
</dbReference>
<dbReference type="NCBIfam" id="TIGR01747">
    <property type="entry name" value="diampropi_NH3ly"/>
    <property type="match status" value="1"/>
</dbReference>
<dbReference type="NCBIfam" id="NF006058">
    <property type="entry name" value="PRK08206.1"/>
    <property type="match status" value="1"/>
</dbReference>
<dbReference type="PANTHER" id="PTHR42937">
    <property type="match status" value="1"/>
</dbReference>
<dbReference type="PANTHER" id="PTHR42937:SF1">
    <property type="entry name" value="DIAMINOPROPIONATE AMMONIA-LYASE"/>
    <property type="match status" value="1"/>
</dbReference>
<dbReference type="Pfam" id="PF00291">
    <property type="entry name" value="PALP"/>
    <property type="match status" value="1"/>
</dbReference>
<dbReference type="SUPFAM" id="SSF53686">
    <property type="entry name" value="Tryptophan synthase beta subunit-like PLP-dependent enzymes"/>
    <property type="match status" value="1"/>
</dbReference>
<evidence type="ECO:0000250" key="1"/>
<evidence type="ECO:0000250" key="2">
    <source>
        <dbReference type="UniProtKB" id="P66899"/>
    </source>
</evidence>
<evidence type="ECO:0000305" key="3"/>
<sequence length="398" mass="43328">MSVFSLKIDIADNKFFNGETSPLFSQSQAKLARQFHQKIAGYRPTPLCALDDLANLFGVKKILVKDESKRFGLNAFKMLGGAYAIAQLLCEKYHLDIETLSFEHLKNAIGEKMTFATTTDGNHGRGVAWAAQQLGQNAVIYMPKGSAQERVDAILNLGAECIVTDMNYDDTVRLTMQHAQQHGWEVVQDTAWEGYTKIPTWIMQGYATLADEAVEQMREMGVTPTHVLLQAGVGAMAGGVLGYLVDVYSPQNLHSIIVEPDKADCIYRSGVKGDIVNVGGDMATIMAGLACGEPNPLGWEILRNCATQFISCQDSVAALGMRVLGNPYGNDPRIISGESGAVGLGVLAAVHYHPQRQSLMEKLALNKDAVVLVISTEGDTDVKHYREVVWEGKHAVAP</sequence>
<comment type="function">
    <text evidence="2">Catalyzes the alpha,beta-elimination reaction of both L- and D-alpha,beta-diaminopropionate (DAP) to form pyruvate and ammonia. The D-isomer of serine is degraded to pyruvate, though very poorly; other amino acids (L-serine, D- and L-threonine, D- and L-beta-Cl-alanine) are not substrates.</text>
</comment>
<comment type="catalytic activity">
    <reaction evidence="2">
        <text>(S)-2,3-diaminopropanoate + H2O + H(+) = pyruvate + 2 NH4(+)</text>
        <dbReference type="Rhea" id="RHEA:22084"/>
        <dbReference type="ChEBI" id="CHEBI:15361"/>
        <dbReference type="ChEBI" id="CHEBI:15377"/>
        <dbReference type="ChEBI" id="CHEBI:15378"/>
        <dbReference type="ChEBI" id="CHEBI:28938"/>
        <dbReference type="ChEBI" id="CHEBI:57721"/>
        <dbReference type="EC" id="4.3.1.15"/>
    </reaction>
</comment>
<comment type="catalytic activity">
    <reaction evidence="2">
        <text>(R)-2,3-diaminopropanoate + H2O + H(+) = pyruvate + 2 NH4(+)</text>
        <dbReference type="Rhea" id="RHEA:52432"/>
        <dbReference type="ChEBI" id="CHEBI:15361"/>
        <dbReference type="ChEBI" id="CHEBI:15377"/>
        <dbReference type="ChEBI" id="CHEBI:15378"/>
        <dbReference type="ChEBI" id="CHEBI:28938"/>
        <dbReference type="ChEBI" id="CHEBI:136599"/>
        <dbReference type="EC" id="4.3.1.15"/>
    </reaction>
</comment>
<comment type="cofactor">
    <cofactor evidence="2">
        <name>pyridoxal 5'-phosphate</name>
        <dbReference type="ChEBI" id="CHEBI:597326"/>
    </cofactor>
    <text evidence="2">Binds 1 pyridoxal phosphate per subunit.</text>
</comment>
<comment type="subunit">
    <text evidence="2">Homodimer.</text>
</comment>
<comment type="similarity">
    <text evidence="3">Belongs to the diaminopropionate ammonia-lyase family.</text>
</comment>
<gene>
    <name type="primary">ygeX</name>
    <name type="ordered locus">Z4210</name>
    <name type="ordered locus">ECs3744</name>
</gene>